<keyword id="KW-0150">Chloroplast</keyword>
<keyword id="KW-0472">Membrane</keyword>
<keyword id="KW-0602">Photosynthesis</keyword>
<keyword id="KW-0604">Photosystem II</keyword>
<keyword id="KW-0934">Plastid</keyword>
<keyword id="KW-0691">RNA editing</keyword>
<keyword id="KW-0793">Thylakoid</keyword>
<keyword id="KW-0812">Transmembrane</keyword>
<keyword id="KW-1133">Transmembrane helix</keyword>
<reference key="1">
    <citation type="journal article" date="2003" name="Nucleic Acids Res.">
        <title>The complete nucleotide sequence of the hornwort (Anthoceros formosae) chloroplast genome: insight into the earliest land plants.</title>
        <authorList>
            <person name="Kugita M."/>
            <person name="Kaneko A."/>
            <person name="Yamamoto Y."/>
            <person name="Takeya Y."/>
            <person name="Matsumoto T."/>
            <person name="Yoshinaga K."/>
        </authorList>
    </citation>
    <scope>NUCLEOTIDE SEQUENCE [LARGE SCALE GENOMIC DNA]</scope>
    <scope>RNA EDITING</scope>
</reference>
<reference key="2">
    <citation type="journal article" date="2003" name="Nucleic Acids Res.">
        <title>RNA editing in hornwort chloroplasts makes more than half the genes functional.</title>
        <authorList>
            <person name="Kugita M."/>
            <person name="Yamamoto Y."/>
            <person name="Fujikawa T."/>
            <person name="Matsumoto T."/>
            <person name="Yoshinaga K."/>
        </authorList>
    </citation>
    <scope>NUCLEOTIDE SEQUENCE [MRNA]</scope>
    <scope>RNA EDITING</scope>
    <source>
        <tissue>Thallus</tissue>
    </source>
</reference>
<dbReference type="EMBL" id="AB086179">
    <property type="protein sequence ID" value="BAC55375.1"/>
    <property type="molecule type" value="Genomic_DNA"/>
</dbReference>
<dbReference type="EMBL" id="AB087463">
    <property type="protein sequence ID" value="BAC55472.1"/>
    <property type="molecule type" value="mRNA"/>
</dbReference>
<dbReference type="RefSeq" id="NP_777439.1">
    <property type="nucleotide sequence ID" value="NC_004543.1"/>
</dbReference>
<dbReference type="SMR" id="Q85BG5"/>
<dbReference type="GeneID" id="2553409"/>
<dbReference type="GO" id="GO:0009535">
    <property type="term" value="C:chloroplast thylakoid membrane"/>
    <property type="evidence" value="ECO:0007669"/>
    <property type="project" value="UniProtKB-SubCell"/>
</dbReference>
<dbReference type="GO" id="GO:0009539">
    <property type="term" value="C:photosystem II reaction center"/>
    <property type="evidence" value="ECO:0007669"/>
    <property type="project" value="InterPro"/>
</dbReference>
<dbReference type="GO" id="GO:0015979">
    <property type="term" value="P:photosynthesis"/>
    <property type="evidence" value="ECO:0007669"/>
    <property type="project" value="UniProtKB-UniRule"/>
</dbReference>
<dbReference type="HAMAP" id="MF_00808">
    <property type="entry name" value="PSII_PsbT"/>
    <property type="match status" value="1"/>
</dbReference>
<dbReference type="InterPro" id="IPR001743">
    <property type="entry name" value="PSII_PsbT"/>
</dbReference>
<dbReference type="InterPro" id="IPR037268">
    <property type="entry name" value="PSII_PsbT_sf"/>
</dbReference>
<dbReference type="PANTHER" id="PTHR36411">
    <property type="match status" value="1"/>
</dbReference>
<dbReference type="PANTHER" id="PTHR36411:SF2">
    <property type="entry name" value="PHOTOSYSTEM II REACTION CENTER PROTEIN T"/>
    <property type="match status" value="1"/>
</dbReference>
<dbReference type="Pfam" id="PF01405">
    <property type="entry name" value="PsbT"/>
    <property type="match status" value="1"/>
</dbReference>
<dbReference type="SUPFAM" id="SSF161029">
    <property type="entry name" value="Photosystem II reaction center protein T, PsbT"/>
    <property type="match status" value="1"/>
</dbReference>
<protein>
    <recommendedName>
        <fullName evidence="1">Photosystem II reaction center protein T</fullName>
        <shortName evidence="1">PSII-T</shortName>
    </recommendedName>
</protein>
<geneLocation type="chloroplast"/>
<feature type="chain" id="PRO_0000217899" description="Photosystem II reaction center protein T">
    <location>
        <begin position="1"/>
        <end position="40"/>
    </location>
</feature>
<feature type="transmembrane region" description="Helical" evidence="1">
    <location>
        <begin position="3"/>
        <end position="23"/>
    </location>
</feature>
<proteinExistence type="evidence at transcript level"/>
<comment type="function">
    <text evidence="1">Found at the monomer-monomer interface of the photosystem II (PS II) dimer, plays a role in assembly and dimerization of PSII. PSII is a light-driven water plastoquinone oxidoreductase, using light energy to abstract electrons from H(2)O, generating a proton gradient subsequently used for ATP formation.</text>
</comment>
<comment type="subunit">
    <text evidence="1">PSII is composed of 1 copy each of membrane proteins PsbA, PsbB, PsbC, PsbD, PsbE, PsbF, PsbH, PsbI, PsbJ, PsbK, PsbL, PsbM, PsbT, PsbY, PsbZ, Psb30/Ycf12, at least 3 peripheral proteins of the oxygen-evolving complex and a large number of cofactors. It forms dimeric complexes.</text>
</comment>
<comment type="subcellular location">
    <subcellularLocation>
        <location evidence="1">Plastid</location>
        <location evidence="1">Chloroplast thylakoid membrane</location>
        <topology evidence="1">Single-pass membrane protein</topology>
    </subcellularLocation>
</comment>
<comment type="RNA editing">
    <location>
        <position position="14" evidence="2 3"/>
    </location>
</comment>
<comment type="similarity">
    <text evidence="1 4">Belongs to the PsbT family.</text>
</comment>
<gene>
    <name evidence="1" type="primary">psbT</name>
</gene>
<name>PSBT_ANTAG</name>
<organism>
    <name type="scientific">Anthoceros angustus</name>
    <name type="common">Hornwort</name>
    <name type="synonym">Anthoceros formosae</name>
    <dbReference type="NCBI Taxonomy" id="48387"/>
    <lineage>
        <taxon>Eukaryota</taxon>
        <taxon>Viridiplantae</taxon>
        <taxon>Streptophyta</taxon>
        <taxon>Embryophyta</taxon>
        <taxon>Anthocerotophyta</taxon>
        <taxon>Anthocerotopsida</taxon>
        <taxon>Anthocerotidae</taxon>
        <taxon>Anthocerotales</taxon>
        <taxon>Anthocerotaceae</taxon>
        <taxon>Anthoceros</taxon>
    </lineage>
</organism>
<sequence length="40" mass="4413">MEALVYTFLLVGTLGIIFFAIFFRDPPKVPSKGVPSKGKK</sequence>
<evidence type="ECO:0000255" key="1">
    <source>
        <dbReference type="HAMAP-Rule" id="MF_00808"/>
    </source>
</evidence>
<evidence type="ECO:0000269" key="2">
    <source>
    </source>
</evidence>
<evidence type="ECO:0000269" key="3">
    <source>
    </source>
</evidence>
<evidence type="ECO:0000305" key="4"/>
<accession>Q85BG5</accession>